<sequence>MKQLYGVIGNPIGHSLSPVMHNDAFEHLNMDAHYHAFLVKEEVLGEAVRGLKALGISGFNVTTPHKVAIMDYLDEIDPLAKQIGAVNTVVHKDGKLIGYNTDGIGFVRALQSISNEPLQEKRILLLGAGGASRAIYFSLADVGVKEIDVANRTVDKAKELIAACTATVHSVALSLEKATKEQGNYDIIIQTTTIGMHPRVEHTPLQISSLKKGTIVSDIIYNPFETKILCEAKEQGAIIQNGIDMFVYQGALAFEMWTGCVPNIERMKQLVIRKLGG</sequence>
<gene>
    <name evidence="1" type="primary">aroE</name>
    <name type="ordered locus">BCE33L4080</name>
</gene>
<organism>
    <name type="scientific">Bacillus cereus (strain ZK / E33L)</name>
    <dbReference type="NCBI Taxonomy" id="288681"/>
    <lineage>
        <taxon>Bacteria</taxon>
        <taxon>Bacillati</taxon>
        <taxon>Bacillota</taxon>
        <taxon>Bacilli</taxon>
        <taxon>Bacillales</taxon>
        <taxon>Bacillaceae</taxon>
        <taxon>Bacillus</taxon>
        <taxon>Bacillus cereus group</taxon>
    </lineage>
</organism>
<reference key="1">
    <citation type="journal article" date="2006" name="J. Bacteriol.">
        <title>Pathogenomic sequence analysis of Bacillus cereus and Bacillus thuringiensis isolates closely related to Bacillus anthracis.</title>
        <authorList>
            <person name="Han C.S."/>
            <person name="Xie G."/>
            <person name="Challacombe J.F."/>
            <person name="Altherr M.R."/>
            <person name="Bhotika S.S."/>
            <person name="Bruce D."/>
            <person name="Campbell C.S."/>
            <person name="Campbell M.L."/>
            <person name="Chen J."/>
            <person name="Chertkov O."/>
            <person name="Cleland C."/>
            <person name="Dimitrijevic M."/>
            <person name="Doggett N.A."/>
            <person name="Fawcett J.J."/>
            <person name="Glavina T."/>
            <person name="Goodwin L.A."/>
            <person name="Hill K.K."/>
            <person name="Hitchcock P."/>
            <person name="Jackson P.J."/>
            <person name="Keim P."/>
            <person name="Kewalramani A.R."/>
            <person name="Longmire J."/>
            <person name="Lucas S."/>
            <person name="Malfatti S."/>
            <person name="McMurry K."/>
            <person name="Meincke L.J."/>
            <person name="Misra M."/>
            <person name="Moseman B.L."/>
            <person name="Mundt M."/>
            <person name="Munk A.C."/>
            <person name="Okinaka R.T."/>
            <person name="Parson-Quintana B."/>
            <person name="Reilly L.P."/>
            <person name="Richardson P."/>
            <person name="Robinson D.L."/>
            <person name="Rubin E."/>
            <person name="Saunders E."/>
            <person name="Tapia R."/>
            <person name="Tesmer J.G."/>
            <person name="Thayer N."/>
            <person name="Thompson L.S."/>
            <person name="Tice H."/>
            <person name="Ticknor L.O."/>
            <person name="Wills P.L."/>
            <person name="Brettin T.S."/>
            <person name="Gilna P."/>
        </authorList>
    </citation>
    <scope>NUCLEOTIDE SEQUENCE [LARGE SCALE GENOMIC DNA]</scope>
    <source>
        <strain>ZK / E33L</strain>
    </source>
</reference>
<feature type="chain" id="PRO_1000021261" description="Shikimate dehydrogenase (NADP(+))">
    <location>
        <begin position="1"/>
        <end position="277"/>
    </location>
</feature>
<feature type="active site" description="Proton acceptor" evidence="1">
    <location>
        <position position="66"/>
    </location>
</feature>
<feature type="binding site" evidence="1">
    <location>
        <begin position="15"/>
        <end position="17"/>
    </location>
    <ligand>
        <name>shikimate</name>
        <dbReference type="ChEBI" id="CHEBI:36208"/>
    </ligand>
</feature>
<feature type="binding site" evidence="1">
    <location>
        <position position="62"/>
    </location>
    <ligand>
        <name>shikimate</name>
        <dbReference type="ChEBI" id="CHEBI:36208"/>
    </ligand>
</feature>
<feature type="binding site" evidence="1">
    <location>
        <position position="87"/>
    </location>
    <ligand>
        <name>shikimate</name>
        <dbReference type="ChEBI" id="CHEBI:36208"/>
    </ligand>
</feature>
<feature type="binding site" evidence="1">
    <location>
        <position position="102"/>
    </location>
    <ligand>
        <name>shikimate</name>
        <dbReference type="ChEBI" id="CHEBI:36208"/>
    </ligand>
</feature>
<feature type="binding site" evidence="1">
    <location>
        <begin position="127"/>
        <end position="131"/>
    </location>
    <ligand>
        <name>NADP(+)</name>
        <dbReference type="ChEBI" id="CHEBI:58349"/>
    </ligand>
</feature>
<feature type="binding site" evidence="1">
    <location>
        <begin position="151"/>
        <end position="156"/>
    </location>
    <ligand>
        <name>NADP(+)</name>
        <dbReference type="ChEBI" id="CHEBI:58349"/>
    </ligand>
</feature>
<feature type="binding site" evidence="1">
    <location>
        <position position="219"/>
    </location>
    <ligand>
        <name>NADP(+)</name>
        <dbReference type="ChEBI" id="CHEBI:58349"/>
    </ligand>
</feature>
<feature type="binding site" evidence="1">
    <location>
        <position position="221"/>
    </location>
    <ligand>
        <name>shikimate</name>
        <dbReference type="ChEBI" id="CHEBI:36208"/>
    </ligand>
</feature>
<feature type="binding site" evidence="1">
    <location>
        <position position="242"/>
    </location>
    <ligand>
        <name>NADP(+)</name>
        <dbReference type="ChEBI" id="CHEBI:58349"/>
    </ligand>
</feature>
<dbReference type="EC" id="1.1.1.25" evidence="1"/>
<dbReference type="EMBL" id="CP000001">
    <property type="protein sequence ID" value="AAU16190.1"/>
    <property type="molecule type" value="Genomic_DNA"/>
</dbReference>
<dbReference type="RefSeq" id="WP_000812087.1">
    <property type="nucleotide sequence ID" value="NC_006274.1"/>
</dbReference>
<dbReference type="SMR" id="Q634K8"/>
<dbReference type="KEGG" id="bcz:BCE33L4080"/>
<dbReference type="PATRIC" id="fig|288681.22.peg.1308"/>
<dbReference type="UniPathway" id="UPA00053">
    <property type="reaction ID" value="UER00087"/>
</dbReference>
<dbReference type="Proteomes" id="UP000002612">
    <property type="component" value="Chromosome"/>
</dbReference>
<dbReference type="GO" id="GO:0005829">
    <property type="term" value="C:cytosol"/>
    <property type="evidence" value="ECO:0007669"/>
    <property type="project" value="TreeGrafter"/>
</dbReference>
<dbReference type="GO" id="GO:0050661">
    <property type="term" value="F:NADP binding"/>
    <property type="evidence" value="ECO:0007669"/>
    <property type="project" value="InterPro"/>
</dbReference>
<dbReference type="GO" id="GO:0004764">
    <property type="term" value="F:shikimate 3-dehydrogenase (NADP+) activity"/>
    <property type="evidence" value="ECO:0007669"/>
    <property type="project" value="UniProtKB-UniRule"/>
</dbReference>
<dbReference type="GO" id="GO:0008652">
    <property type="term" value="P:amino acid biosynthetic process"/>
    <property type="evidence" value="ECO:0007669"/>
    <property type="project" value="UniProtKB-KW"/>
</dbReference>
<dbReference type="GO" id="GO:0009073">
    <property type="term" value="P:aromatic amino acid family biosynthetic process"/>
    <property type="evidence" value="ECO:0007669"/>
    <property type="project" value="UniProtKB-KW"/>
</dbReference>
<dbReference type="GO" id="GO:0009423">
    <property type="term" value="P:chorismate biosynthetic process"/>
    <property type="evidence" value="ECO:0007669"/>
    <property type="project" value="UniProtKB-UniRule"/>
</dbReference>
<dbReference type="GO" id="GO:0019632">
    <property type="term" value="P:shikimate metabolic process"/>
    <property type="evidence" value="ECO:0007669"/>
    <property type="project" value="InterPro"/>
</dbReference>
<dbReference type="CDD" id="cd01065">
    <property type="entry name" value="NAD_bind_Shikimate_DH"/>
    <property type="match status" value="1"/>
</dbReference>
<dbReference type="FunFam" id="3.40.50.10860:FF:000011">
    <property type="entry name" value="Shikimate dehydrogenase (NADP(+))"/>
    <property type="match status" value="1"/>
</dbReference>
<dbReference type="FunFam" id="3.40.50.720:FF:000257">
    <property type="entry name" value="Shikimate dehydrogenase (NADP(+))"/>
    <property type="match status" value="1"/>
</dbReference>
<dbReference type="Gene3D" id="3.40.50.10860">
    <property type="entry name" value="Leucine Dehydrogenase, chain A, domain 1"/>
    <property type="match status" value="1"/>
</dbReference>
<dbReference type="Gene3D" id="3.40.50.720">
    <property type="entry name" value="NAD(P)-binding Rossmann-like Domain"/>
    <property type="match status" value="1"/>
</dbReference>
<dbReference type="HAMAP" id="MF_00222">
    <property type="entry name" value="Shikimate_DH_AroE"/>
    <property type="match status" value="1"/>
</dbReference>
<dbReference type="InterPro" id="IPR046346">
    <property type="entry name" value="Aminoacid_DH-like_N_sf"/>
</dbReference>
<dbReference type="InterPro" id="IPR036291">
    <property type="entry name" value="NAD(P)-bd_dom_sf"/>
</dbReference>
<dbReference type="InterPro" id="IPR041121">
    <property type="entry name" value="SDH_C"/>
</dbReference>
<dbReference type="InterPro" id="IPR011342">
    <property type="entry name" value="Shikimate_DH"/>
</dbReference>
<dbReference type="InterPro" id="IPR013708">
    <property type="entry name" value="Shikimate_DH-bd_N"/>
</dbReference>
<dbReference type="InterPro" id="IPR022893">
    <property type="entry name" value="Shikimate_DH_fam"/>
</dbReference>
<dbReference type="InterPro" id="IPR006151">
    <property type="entry name" value="Shikm_DH/Glu-tRNA_Rdtase"/>
</dbReference>
<dbReference type="NCBIfam" id="TIGR00507">
    <property type="entry name" value="aroE"/>
    <property type="match status" value="1"/>
</dbReference>
<dbReference type="NCBIfam" id="NF001319">
    <property type="entry name" value="PRK00258.3-3"/>
    <property type="match status" value="1"/>
</dbReference>
<dbReference type="PANTHER" id="PTHR21089:SF1">
    <property type="entry name" value="BIFUNCTIONAL 3-DEHYDROQUINATE DEHYDRATASE_SHIKIMATE DEHYDROGENASE, CHLOROPLASTIC"/>
    <property type="match status" value="1"/>
</dbReference>
<dbReference type="PANTHER" id="PTHR21089">
    <property type="entry name" value="SHIKIMATE DEHYDROGENASE"/>
    <property type="match status" value="1"/>
</dbReference>
<dbReference type="Pfam" id="PF18317">
    <property type="entry name" value="SDH_C"/>
    <property type="match status" value="1"/>
</dbReference>
<dbReference type="Pfam" id="PF01488">
    <property type="entry name" value="Shikimate_DH"/>
    <property type="match status" value="1"/>
</dbReference>
<dbReference type="Pfam" id="PF08501">
    <property type="entry name" value="Shikimate_dh_N"/>
    <property type="match status" value="1"/>
</dbReference>
<dbReference type="SUPFAM" id="SSF53223">
    <property type="entry name" value="Aminoacid dehydrogenase-like, N-terminal domain"/>
    <property type="match status" value="1"/>
</dbReference>
<dbReference type="SUPFAM" id="SSF51735">
    <property type="entry name" value="NAD(P)-binding Rossmann-fold domains"/>
    <property type="match status" value="1"/>
</dbReference>
<protein>
    <recommendedName>
        <fullName evidence="1">Shikimate dehydrogenase (NADP(+))</fullName>
        <shortName evidence="1">SDH</shortName>
        <ecNumber evidence="1">1.1.1.25</ecNumber>
    </recommendedName>
</protein>
<keyword id="KW-0028">Amino-acid biosynthesis</keyword>
<keyword id="KW-0057">Aromatic amino acid biosynthesis</keyword>
<keyword id="KW-0521">NADP</keyword>
<keyword id="KW-0560">Oxidoreductase</keyword>
<evidence type="ECO:0000255" key="1">
    <source>
        <dbReference type="HAMAP-Rule" id="MF_00222"/>
    </source>
</evidence>
<accession>Q634K8</accession>
<proteinExistence type="inferred from homology"/>
<name>AROE_BACCZ</name>
<comment type="function">
    <text evidence="1">Involved in the biosynthesis of the chorismate, which leads to the biosynthesis of aromatic amino acids. Catalyzes the reversible NADPH linked reduction of 3-dehydroshikimate (DHSA) to yield shikimate (SA).</text>
</comment>
<comment type="catalytic activity">
    <reaction evidence="1">
        <text>shikimate + NADP(+) = 3-dehydroshikimate + NADPH + H(+)</text>
        <dbReference type="Rhea" id="RHEA:17737"/>
        <dbReference type="ChEBI" id="CHEBI:15378"/>
        <dbReference type="ChEBI" id="CHEBI:16630"/>
        <dbReference type="ChEBI" id="CHEBI:36208"/>
        <dbReference type="ChEBI" id="CHEBI:57783"/>
        <dbReference type="ChEBI" id="CHEBI:58349"/>
        <dbReference type="EC" id="1.1.1.25"/>
    </reaction>
</comment>
<comment type="pathway">
    <text evidence="1">Metabolic intermediate biosynthesis; chorismate biosynthesis; chorismate from D-erythrose 4-phosphate and phosphoenolpyruvate: step 4/7.</text>
</comment>
<comment type="subunit">
    <text evidence="1">Homodimer.</text>
</comment>
<comment type="similarity">
    <text evidence="1">Belongs to the shikimate dehydrogenase family.</text>
</comment>